<organism>
    <name type="scientific">Drosophila ananassae</name>
    <name type="common">Fruit fly</name>
    <dbReference type="NCBI Taxonomy" id="7217"/>
    <lineage>
        <taxon>Eukaryota</taxon>
        <taxon>Metazoa</taxon>
        <taxon>Ecdysozoa</taxon>
        <taxon>Arthropoda</taxon>
        <taxon>Hexapoda</taxon>
        <taxon>Insecta</taxon>
        <taxon>Pterygota</taxon>
        <taxon>Neoptera</taxon>
        <taxon>Endopterygota</taxon>
        <taxon>Diptera</taxon>
        <taxon>Brachycera</taxon>
        <taxon>Muscomorpha</taxon>
        <taxon>Ephydroidea</taxon>
        <taxon>Drosophilidae</taxon>
        <taxon>Drosophila</taxon>
        <taxon>Sophophora</taxon>
    </lineage>
</organism>
<keyword id="KW-1003">Cell membrane</keyword>
<keyword id="KW-0966">Cell projection</keyword>
<keyword id="KW-0217">Developmental protein</keyword>
<keyword id="KW-0256">Endoplasmic reticulum</keyword>
<keyword id="KW-0967">Endosome</keyword>
<keyword id="KW-0325">Glycoprotein</keyword>
<keyword id="KW-0333">Golgi apparatus</keyword>
<keyword id="KW-0472">Membrane</keyword>
<keyword id="KW-0628">Postsynaptic cell membrane</keyword>
<keyword id="KW-1185">Reference proteome</keyword>
<keyword id="KW-0709">Segmentation polarity protein</keyword>
<keyword id="KW-0770">Synapse</keyword>
<keyword id="KW-0812">Transmembrane</keyword>
<keyword id="KW-1133">Transmembrane helix</keyword>
<keyword id="KW-0879">Wnt signaling pathway</keyword>
<proteinExistence type="inferred from homology"/>
<protein>
    <recommendedName>
        <fullName evidence="3">Protein wntless</fullName>
    </recommendedName>
</protein>
<evidence type="ECO:0000250" key="1"/>
<evidence type="ECO:0000250" key="2">
    <source>
        <dbReference type="UniProtKB" id="Q5T9L3"/>
    </source>
</evidence>
<evidence type="ECO:0000250" key="3">
    <source>
        <dbReference type="UniProtKB" id="Q95ST2"/>
    </source>
</evidence>
<evidence type="ECO:0000255" key="4"/>
<evidence type="ECO:0000256" key="5">
    <source>
        <dbReference type="SAM" id="MobiDB-lite"/>
    </source>
</evidence>
<evidence type="ECO:0000312" key="6">
    <source>
        <dbReference type="EMBL" id="EDV39311.1"/>
    </source>
</evidence>
<feature type="chain" id="PRO_0000390661" description="Protein wntless" evidence="4">
    <location>
        <begin position="1"/>
        <end position="562"/>
    </location>
</feature>
<feature type="topological domain" description="Cytoplasmic" evidence="2">
    <location>
        <begin position="1"/>
        <end position="13"/>
    </location>
</feature>
<feature type="transmembrane region" description="Helical; Name=1" evidence="4">
    <location>
        <begin position="14"/>
        <end position="34"/>
    </location>
</feature>
<feature type="topological domain" description="Lumenal" evidence="2">
    <location>
        <begin position="35"/>
        <end position="239"/>
    </location>
</feature>
<feature type="transmembrane region" description="Helical; Name=2" evidence="4">
    <location>
        <begin position="240"/>
        <end position="260"/>
    </location>
</feature>
<feature type="topological domain" description="Cytoplasmic" evidence="2">
    <location>
        <begin position="261"/>
        <end position="270"/>
    </location>
</feature>
<feature type="transmembrane region" description="Helical; Name=3" evidence="4">
    <location>
        <begin position="271"/>
        <end position="291"/>
    </location>
</feature>
<feature type="topological domain" description="Lumenal" evidence="2">
    <location>
        <begin position="292"/>
        <end position="311"/>
    </location>
</feature>
<feature type="transmembrane region" description="Helical; Name=4" evidence="4">
    <location>
        <begin position="312"/>
        <end position="332"/>
    </location>
</feature>
<feature type="topological domain" description="Cytoplasmic" evidence="2">
    <location>
        <begin position="333"/>
        <end position="344"/>
    </location>
</feature>
<feature type="transmembrane region" description="Helical; Name=5" evidence="4">
    <location>
        <begin position="345"/>
        <end position="365"/>
    </location>
</feature>
<feature type="topological domain" description="Lumenal" evidence="2">
    <location>
        <begin position="366"/>
        <end position="390"/>
    </location>
</feature>
<feature type="transmembrane region" description="Helical; Name=6" evidence="4">
    <location>
        <begin position="391"/>
        <end position="411"/>
    </location>
</feature>
<feature type="topological domain" description="Cytoplasmic" evidence="2">
    <location>
        <begin position="412"/>
        <end position="441"/>
    </location>
</feature>
<feature type="transmembrane region" description="Helical; Name=7" evidence="4">
    <location>
        <begin position="442"/>
        <end position="462"/>
    </location>
</feature>
<feature type="topological domain" description="Lumenal" evidence="2">
    <location>
        <begin position="463"/>
        <end position="482"/>
    </location>
</feature>
<feature type="transmembrane region" description="Helical; Name=8" evidence="4">
    <location>
        <begin position="483"/>
        <end position="503"/>
    </location>
</feature>
<feature type="topological domain" description="Cytoplasmic" evidence="2">
    <location>
        <begin position="504"/>
        <end position="562"/>
    </location>
</feature>
<feature type="region of interest" description="Disordered" evidence="5">
    <location>
        <begin position="539"/>
        <end position="562"/>
    </location>
</feature>
<feature type="compositionally biased region" description="Polar residues" evidence="5">
    <location>
        <begin position="541"/>
        <end position="556"/>
    </location>
</feature>
<feature type="glycosylation site" description="N-linked (GlcNAc...) asparagine" evidence="4">
    <location>
        <position position="58"/>
    </location>
</feature>
<gene>
    <name evidence="3" type="primary">wls</name>
    <name type="ORF">GF24563</name>
</gene>
<name>WLS_DROAN</name>
<accession>B3M3X7</accession>
<sequence length="562" mass="64259">MSGTILENLSGRKLSILVASLLLCQVFCFLLGGLYAPLPAGHVTVLGSLCREDHTRQNDTSFLLYSRGAGACIPVSREEVERDPMKMANELVHVFQMPLPRDLRDLDYSRWQQNLIGVLQVEFGYDSTSELREPPKELQLTIDMRLAYRNKGDPDQAWKLYAHGVEQRYLDCVTAHVGPTETLYSCDMIPLFELGALHHSFYLLNLRFPLDTPRQMNLQFGHMHDLTLTAIHQNGGFTQIWLMLKTVLFPFVVGIMIWFWRRVHLLQRSPALLEYMLIYLGGALTFLNLPLEYLSLVVEMPYMLLLSDIRQGIFYAMLLSFWLVFAGEHMLIQDAPNKSTIRSRYWKHLSAVVVGCISLFVFDICERGVQLRNPFYSIWTTPLGAKVAMTFIILAGVSAAIYFLFLCYMIWKVFRNIGDKRTSLPSMSQARRLHYEGLIYRFKFLMLATLLCAALTVAGFIMGQMAEGQWQWNDNVEIQLTSAFLTGVYGMWNIYIFALLILYAPSHKQWPTMHHSDETTQSNENIVASAASEEIEFSHLPSDSNPSEISSLTSFTRKVAFD</sequence>
<comment type="function">
    <text evidence="1">A segment polarity gene required for wingless (wg)-dependent patterning processes, acting in both wg-sending cells and wg-target cells. In non-neuronal cells wls directs wg secretion. The wls traffic loop encompasses the Golgi, the cell surface, an endocytic compartment and a retrograde route leading back to the Golgi, and involves clathrin-mediated endocytosis and the retromer complex (a conserved protein complex consisting of Vps35 and Vps26). In neuronal cells (the larval motorneuron NMJ), the wg signal moves across the synapse via the release of wls-containing exosome-like vesicles. Postsynaptic wls is required for the trafficking of fz2 through the fz2-interacting protein Grip (By similarity).</text>
</comment>
<comment type="subunit">
    <text evidence="1">Interacts with wg; in the Golgi. Interacts with Vps35, a component of the retromer complex; wls stability is regulated by Vps35 (By similarity).</text>
</comment>
<comment type="subcellular location">
    <subcellularLocation>
        <location evidence="3">Presynaptic cell membrane</location>
        <topology evidence="3">Multi-pass membrane protein</topology>
    </subcellularLocation>
    <subcellularLocation>
        <location evidence="3">Postsynaptic cell membrane</location>
        <topology evidence="3">Multi-pass membrane protein</topology>
    </subcellularLocation>
    <subcellularLocation>
        <location evidence="3">Cell membrane</location>
        <topology evidence="3">Multi-pass membrane protein</topology>
    </subcellularLocation>
    <subcellularLocation>
        <location evidence="3">Endoplasmic reticulum membrane</location>
        <topology evidence="3">Multi-pass membrane protein</topology>
    </subcellularLocation>
    <subcellularLocation>
        <location evidence="3">Endosome membrane</location>
        <topology evidence="3">Multi-pass membrane protein</topology>
    </subcellularLocation>
    <subcellularLocation>
        <location evidence="3">Golgi apparatus membrane</location>
        <topology evidence="3">Multi-pass membrane protein</topology>
    </subcellularLocation>
    <text evidence="1">In non-neuronal cells, wls binds to wg in the Golgi and accompanies it to the plasma membrane where the two proteins dissociate. Wg is secreted and wls is then internalized and returns to the Golgi apparatus in a retromer-dependent manner. Wls and wg colocalize in the Golgi apparatus in wg-producing cells, and reduced expression is seen in non-producing cells. Endoplasmic reticulum expression is unchanged in wg-producing versus non-producing cells. In neuronal cells, wls is localized both pre- and postsynaptically and is transferred trans-synaptically from the pre- to the postsynaptic compartment (By similarity).</text>
</comment>
<comment type="similarity">
    <text evidence="4">Belongs to the wntless family.</text>
</comment>
<reference evidence="6" key="1">
    <citation type="journal article" date="2007" name="Nature">
        <title>Evolution of genes and genomes on the Drosophila phylogeny.</title>
        <authorList>
            <consortium name="Drosophila 12 genomes consortium"/>
        </authorList>
    </citation>
    <scope>NUCLEOTIDE SEQUENCE [LARGE SCALE GENOMIC DNA]</scope>
    <source>
        <strain evidence="6">Tucson 14024-0371.13</strain>
    </source>
</reference>
<dbReference type="EMBL" id="CH902618">
    <property type="protein sequence ID" value="EDV39311.1"/>
    <property type="molecule type" value="Genomic_DNA"/>
</dbReference>
<dbReference type="SMR" id="B3M3X7"/>
<dbReference type="FunCoup" id="B3M3X7">
    <property type="interactions" value="612"/>
</dbReference>
<dbReference type="STRING" id="7217.B3M3X7"/>
<dbReference type="GlyCosmos" id="B3M3X7">
    <property type="glycosylation" value="1 site, No reported glycans"/>
</dbReference>
<dbReference type="EnsemblMetazoa" id="FBtr0129263">
    <property type="protein sequence ID" value="FBpp0127755"/>
    <property type="gene ID" value="FBgn0101557"/>
</dbReference>
<dbReference type="EnsemblMetazoa" id="XM_001956469.4">
    <property type="protein sequence ID" value="XP_001956505.1"/>
    <property type="gene ID" value="LOC6507195"/>
</dbReference>
<dbReference type="GeneID" id="6507195"/>
<dbReference type="KEGG" id="dan:6507195"/>
<dbReference type="CTD" id="79971"/>
<dbReference type="eggNOG" id="ENOG502QSE2">
    <property type="taxonomic scope" value="Eukaryota"/>
</dbReference>
<dbReference type="HOGENOM" id="CLU_022911_0_0_1"/>
<dbReference type="InParanoid" id="B3M3X7"/>
<dbReference type="OMA" id="GQWKWDE"/>
<dbReference type="OrthoDB" id="5804250at2759"/>
<dbReference type="PhylomeDB" id="B3M3X7"/>
<dbReference type="Proteomes" id="UP000007801">
    <property type="component" value="Unassembled WGS sequence"/>
</dbReference>
<dbReference type="GO" id="GO:0042995">
    <property type="term" value="C:cell projection"/>
    <property type="evidence" value="ECO:0007669"/>
    <property type="project" value="UniProtKB-KW"/>
</dbReference>
<dbReference type="GO" id="GO:0005789">
    <property type="term" value="C:endoplasmic reticulum membrane"/>
    <property type="evidence" value="ECO:0000250"/>
    <property type="project" value="UniProtKB"/>
</dbReference>
<dbReference type="GO" id="GO:0010008">
    <property type="term" value="C:endosome membrane"/>
    <property type="evidence" value="ECO:0000250"/>
    <property type="project" value="UniProtKB"/>
</dbReference>
<dbReference type="GO" id="GO:0000139">
    <property type="term" value="C:Golgi membrane"/>
    <property type="evidence" value="ECO:0000250"/>
    <property type="project" value="UniProtKB"/>
</dbReference>
<dbReference type="GO" id="GO:0031594">
    <property type="term" value="C:neuromuscular junction"/>
    <property type="evidence" value="ECO:0000250"/>
    <property type="project" value="UniProtKB"/>
</dbReference>
<dbReference type="GO" id="GO:0005886">
    <property type="term" value="C:plasma membrane"/>
    <property type="evidence" value="ECO:0000250"/>
    <property type="project" value="UniProtKB"/>
</dbReference>
<dbReference type="GO" id="GO:0045211">
    <property type="term" value="C:postsynaptic membrane"/>
    <property type="evidence" value="ECO:0000250"/>
    <property type="project" value="UniProtKB"/>
</dbReference>
<dbReference type="GO" id="GO:0042734">
    <property type="term" value="C:presynaptic membrane"/>
    <property type="evidence" value="ECO:0000250"/>
    <property type="project" value="UniProtKB"/>
</dbReference>
<dbReference type="GO" id="GO:0030672">
    <property type="term" value="C:synaptic vesicle membrane"/>
    <property type="evidence" value="ECO:0000250"/>
    <property type="project" value="UniProtKB"/>
</dbReference>
<dbReference type="GO" id="GO:0017147">
    <property type="term" value="F:Wnt-protein binding"/>
    <property type="evidence" value="ECO:0000250"/>
    <property type="project" value="UniProtKB"/>
</dbReference>
<dbReference type="GO" id="GO:0008587">
    <property type="term" value="P:imaginal disc-derived wing margin morphogenesis"/>
    <property type="evidence" value="ECO:0000250"/>
    <property type="project" value="UniProtKB"/>
</dbReference>
<dbReference type="GO" id="GO:0006886">
    <property type="term" value="P:intracellular protein transport"/>
    <property type="evidence" value="ECO:0007669"/>
    <property type="project" value="TreeGrafter"/>
</dbReference>
<dbReference type="GO" id="GO:0050714">
    <property type="term" value="P:positive regulation of protein secretion"/>
    <property type="evidence" value="ECO:0000250"/>
    <property type="project" value="UniProtKB"/>
</dbReference>
<dbReference type="GO" id="GO:0030177">
    <property type="term" value="P:positive regulation of Wnt signaling pathway"/>
    <property type="evidence" value="ECO:0000250"/>
    <property type="project" value="UniProtKB"/>
</dbReference>
<dbReference type="GO" id="GO:0033157">
    <property type="term" value="P:regulation of intracellular protein transport"/>
    <property type="evidence" value="ECO:0000250"/>
    <property type="project" value="UniProtKB"/>
</dbReference>
<dbReference type="GO" id="GO:0007367">
    <property type="term" value="P:segment polarity determination"/>
    <property type="evidence" value="ECO:0000250"/>
    <property type="project" value="UniProtKB"/>
</dbReference>
<dbReference type="GO" id="GO:0061355">
    <property type="term" value="P:Wnt protein secretion"/>
    <property type="evidence" value="ECO:0007669"/>
    <property type="project" value="TreeGrafter"/>
</dbReference>
<dbReference type="GO" id="GO:0016055">
    <property type="term" value="P:Wnt signaling pathway"/>
    <property type="evidence" value="ECO:0007669"/>
    <property type="project" value="UniProtKB-KW"/>
</dbReference>
<dbReference type="InterPro" id="IPR047843">
    <property type="entry name" value="WLS-like_TM"/>
</dbReference>
<dbReference type="InterPro" id="IPR053936">
    <property type="entry name" value="WLS_GOLD"/>
</dbReference>
<dbReference type="InterPro" id="IPR009551">
    <property type="entry name" value="Wntless"/>
</dbReference>
<dbReference type="PANTHER" id="PTHR13449">
    <property type="entry name" value="INTEGRAL MEMBRANE PROTEIN GPR177"/>
    <property type="match status" value="1"/>
</dbReference>
<dbReference type="PANTHER" id="PTHR13449:SF2">
    <property type="entry name" value="PROTEIN WNTLESS HOMOLOG"/>
    <property type="match status" value="1"/>
</dbReference>
<dbReference type="Pfam" id="PF06664">
    <property type="entry name" value="WLS-like_TM"/>
    <property type="match status" value="1"/>
</dbReference>
<dbReference type="Pfam" id="PF21883">
    <property type="entry name" value="WLS_GOLD"/>
    <property type="match status" value="1"/>
</dbReference>